<sequence>MIIPVRCFTCGRPLGHLYPIFKRRVLAGERPGEVLDSLGVYRYCCRRTLLSHVEWIDDVLAYERRS</sequence>
<evidence type="ECO:0000255" key="1">
    <source>
        <dbReference type="HAMAP-Rule" id="MF_00250"/>
    </source>
</evidence>
<name>RPO10_PYRNV</name>
<dbReference type="EC" id="2.7.7.6" evidence="1"/>
<dbReference type="EMBL" id="CP001014">
    <property type="protein sequence ID" value="ACB40888.1"/>
    <property type="molecule type" value="Genomic_DNA"/>
</dbReference>
<dbReference type="RefSeq" id="WP_012351307.1">
    <property type="nucleotide sequence ID" value="NC_010525.1"/>
</dbReference>
<dbReference type="SMR" id="B1YC34"/>
<dbReference type="STRING" id="444157.Tneu_1973"/>
<dbReference type="GeneID" id="6165990"/>
<dbReference type="KEGG" id="tne:Tneu_1973"/>
<dbReference type="eggNOG" id="arCOG04244">
    <property type="taxonomic scope" value="Archaea"/>
</dbReference>
<dbReference type="HOGENOM" id="CLU_143122_1_1_2"/>
<dbReference type="OrthoDB" id="371754at2157"/>
<dbReference type="Proteomes" id="UP000001694">
    <property type="component" value="Chromosome"/>
</dbReference>
<dbReference type="GO" id="GO:0005737">
    <property type="term" value="C:cytoplasm"/>
    <property type="evidence" value="ECO:0007669"/>
    <property type="project" value="UniProtKB-SubCell"/>
</dbReference>
<dbReference type="GO" id="GO:0000428">
    <property type="term" value="C:DNA-directed RNA polymerase complex"/>
    <property type="evidence" value="ECO:0007669"/>
    <property type="project" value="UniProtKB-KW"/>
</dbReference>
<dbReference type="GO" id="GO:0003677">
    <property type="term" value="F:DNA binding"/>
    <property type="evidence" value="ECO:0007669"/>
    <property type="project" value="InterPro"/>
</dbReference>
<dbReference type="GO" id="GO:0003899">
    <property type="term" value="F:DNA-directed RNA polymerase activity"/>
    <property type="evidence" value="ECO:0007669"/>
    <property type="project" value="UniProtKB-UniRule"/>
</dbReference>
<dbReference type="GO" id="GO:0008270">
    <property type="term" value="F:zinc ion binding"/>
    <property type="evidence" value="ECO:0007669"/>
    <property type="project" value="UniProtKB-UniRule"/>
</dbReference>
<dbReference type="GO" id="GO:0006351">
    <property type="term" value="P:DNA-templated transcription"/>
    <property type="evidence" value="ECO:0007669"/>
    <property type="project" value="UniProtKB-UniRule"/>
</dbReference>
<dbReference type="Gene3D" id="1.10.10.60">
    <property type="entry name" value="Homeodomain-like"/>
    <property type="match status" value="1"/>
</dbReference>
<dbReference type="HAMAP" id="MF_00250">
    <property type="entry name" value="RNApol_arch_Rpo10"/>
    <property type="match status" value="1"/>
</dbReference>
<dbReference type="InterPro" id="IPR023580">
    <property type="entry name" value="RNA_pol_su_RPB10"/>
</dbReference>
<dbReference type="InterPro" id="IPR020789">
    <property type="entry name" value="RNA_pol_suN_Zn-BS"/>
</dbReference>
<dbReference type="InterPro" id="IPR000268">
    <property type="entry name" value="RPABC5/Rpb10"/>
</dbReference>
<dbReference type="NCBIfam" id="NF003089">
    <property type="entry name" value="PRK04016.1"/>
    <property type="match status" value="1"/>
</dbReference>
<dbReference type="PANTHER" id="PTHR23431:SF3">
    <property type="entry name" value="DNA-DIRECTED RNA POLYMERASES I, II, AND III SUBUNIT RPABC5"/>
    <property type="match status" value="1"/>
</dbReference>
<dbReference type="PANTHER" id="PTHR23431">
    <property type="entry name" value="DNA-DIRECTED RNA POLYMERASES I, II, AND III SUBUNIT RPABC5 FAMILY MEMBER"/>
    <property type="match status" value="1"/>
</dbReference>
<dbReference type="Pfam" id="PF01194">
    <property type="entry name" value="RNA_pol_N"/>
    <property type="match status" value="1"/>
</dbReference>
<dbReference type="PIRSF" id="PIRSF005653">
    <property type="entry name" value="RNA_pol_N/8_sub"/>
    <property type="match status" value="1"/>
</dbReference>
<dbReference type="SUPFAM" id="SSF46924">
    <property type="entry name" value="RNA polymerase subunit RPB10"/>
    <property type="match status" value="1"/>
</dbReference>
<dbReference type="PROSITE" id="PS01112">
    <property type="entry name" value="RNA_POL_N_8KD"/>
    <property type="match status" value="1"/>
</dbReference>
<gene>
    <name evidence="1" type="primary">rpo10</name>
    <name evidence="1" type="synonym">rpoN</name>
    <name type="ordered locus">Tneu_1973</name>
</gene>
<proteinExistence type="inferred from homology"/>
<reference key="1">
    <citation type="submission" date="2008-03" db="EMBL/GenBank/DDBJ databases">
        <title>Complete sequence of Thermoproteus neutrophilus V24Sta.</title>
        <authorList>
            <consortium name="US DOE Joint Genome Institute"/>
            <person name="Copeland A."/>
            <person name="Lucas S."/>
            <person name="Lapidus A."/>
            <person name="Glavina del Rio T."/>
            <person name="Dalin E."/>
            <person name="Tice H."/>
            <person name="Bruce D."/>
            <person name="Goodwin L."/>
            <person name="Pitluck S."/>
            <person name="Sims D."/>
            <person name="Brettin T."/>
            <person name="Detter J.C."/>
            <person name="Han C."/>
            <person name="Kuske C.R."/>
            <person name="Schmutz J."/>
            <person name="Larimer F."/>
            <person name="Land M."/>
            <person name="Hauser L."/>
            <person name="Kyrpides N."/>
            <person name="Mikhailova N."/>
            <person name="Biddle J.F."/>
            <person name="Zhang Z."/>
            <person name="Fitz-Gibbon S.T."/>
            <person name="Lowe T.M."/>
            <person name="Saltikov C."/>
            <person name="House C.H."/>
            <person name="Richardson P."/>
        </authorList>
    </citation>
    <scope>NUCLEOTIDE SEQUENCE [LARGE SCALE GENOMIC DNA]</scope>
    <source>
        <strain>DSM 2338 / JCM 9278 / NBRC 100436 / V24Sta</strain>
    </source>
</reference>
<organism>
    <name type="scientific">Pyrobaculum neutrophilum (strain DSM 2338 / JCM 9278 / NBRC 100436 / V24Sta)</name>
    <name type="common">Thermoproteus neutrophilus</name>
    <dbReference type="NCBI Taxonomy" id="444157"/>
    <lineage>
        <taxon>Archaea</taxon>
        <taxon>Thermoproteota</taxon>
        <taxon>Thermoprotei</taxon>
        <taxon>Thermoproteales</taxon>
        <taxon>Thermoproteaceae</taxon>
        <taxon>Pyrobaculum</taxon>
    </lineage>
</organism>
<keyword id="KW-0963">Cytoplasm</keyword>
<keyword id="KW-0240">DNA-directed RNA polymerase</keyword>
<keyword id="KW-0479">Metal-binding</keyword>
<keyword id="KW-0548">Nucleotidyltransferase</keyword>
<keyword id="KW-0804">Transcription</keyword>
<keyword id="KW-0808">Transferase</keyword>
<keyword id="KW-0862">Zinc</keyword>
<feature type="chain" id="PRO_1000100990" description="DNA-directed RNA polymerase subunit Rpo10">
    <location>
        <begin position="1"/>
        <end position="66"/>
    </location>
</feature>
<feature type="binding site" evidence="1">
    <location>
        <position position="7"/>
    </location>
    <ligand>
        <name>Zn(2+)</name>
        <dbReference type="ChEBI" id="CHEBI:29105"/>
    </ligand>
</feature>
<feature type="binding site" evidence="1">
    <location>
        <position position="10"/>
    </location>
    <ligand>
        <name>Zn(2+)</name>
        <dbReference type="ChEBI" id="CHEBI:29105"/>
    </ligand>
</feature>
<feature type="binding site" evidence="1">
    <location>
        <position position="44"/>
    </location>
    <ligand>
        <name>Zn(2+)</name>
        <dbReference type="ChEBI" id="CHEBI:29105"/>
    </ligand>
</feature>
<feature type="binding site" evidence="1">
    <location>
        <position position="45"/>
    </location>
    <ligand>
        <name>Zn(2+)</name>
        <dbReference type="ChEBI" id="CHEBI:29105"/>
    </ligand>
</feature>
<protein>
    <recommendedName>
        <fullName evidence="1">DNA-directed RNA polymerase subunit Rpo10</fullName>
        <ecNumber evidence="1">2.7.7.6</ecNumber>
    </recommendedName>
    <alternativeName>
        <fullName evidence="1">DNA-directed RNA polymerase subunit N</fullName>
    </alternativeName>
</protein>
<comment type="function">
    <text evidence="1">DNA-dependent RNA polymerase (RNAP) catalyzes the transcription of DNA into RNA using the four ribonucleoside triphosphates as substrates.</text>
</comment>
<comment type="catalytic activity">
    <reaction evidence="1">
        <text>RNA(n) + a ribonucleoside 5'-triphosphate = RNA(n+1) + diphosphate</text>
        <dbReference type="Rhea" id="RHEA:21248"/>
        <dbReference type="Rhea" id="RHEA-COMP:14527"/>
        <dbReference type="Rhea" id="RHEA-COMP:17342"/>
        <dbReference type="ChEBI" id="CHEBI:33019"/>
        <dbReference type="ChEBI" id="CHEBI:61557"/>
        <dbReference type="ChEBI" id="CHEBI:140395"/>
        <dbReference type="EC" id="2.7.7.6"/>
    </reaction>
</comment>
<comment type="cofactor">
    <cofactor evidence="1">
        <name>Zn(2+)</name>
        <dbReference type="ChEBI" id="CHEBI:29105"/>
    </cofactor>
    <text evidence="1">Binds 1 zinc ion.</text>
</comment>
<comment type="subunit">
    <text evidence="1">Part of the RNA polymerase complex.</text>
</comment>
<comment type="subcellular location">
    <subcellularLocation>
        <location evidence="1">Cytoplasm</location>
    </subcellularLocation>
</comment>
<comment type="similarity">
    <text evidence="1">Belongs to the archaeal Rpo10/eukaryotic RPB10 RNA polymerase subunit family.</text>
</comment>
<accession>B1YC34</accession>